<feature type="chain" id="PRO_1000010123" description="Ribosomal RNA small subunit methyltransferase G">
    <location>
        <begin position="1"/>
        <end position="209"/>
    </location>
</feature>
<feature type="binding site" evidence="1">
    <location>
        <position position="71"/>
    </location>
    <ligand>
        <name>S-adenosyl-L-methionine</name>
        <dbReference type="ChEBI" id="CHEBI:59789"/>
    </ligand>
</feature>
<feature type="binding site" evidence="1">
    <location>
        <position position="76"/>
    </location>
    <ligand>
        <name>S-adenosyl-L-methionine</name>
        <dbReference type="ChEBI" id="CHEBI:59789"/>
    </ligand>
</feature>
<feature type="binding site" evidence="1">
    <location>
        <begin position="122"/>
        <end position="123"/>
    </location>
    <ligand>
        <name>S-adenosyl-L-methionine</name>
        <dbReference type="ChEBI" id="CHEBI:59789"/>
    </ligand>
</feature>
<feature type="binding site" evidence="1">
    <location>
        <position position="135"/>
    </location>
    <ligand>
        <name>S-adenosyl-L-methionine</name>
        <dbReference type="ChEBI" id="CHEBI:59789"/>
    </ligand>
</feature>
<keyword id="KW-0963">Cytoplasm</keyword>
<keyword id="KW-0489">Methyltransferase</keyword>
<keyword id="KW-0698">rRNA processing</keyword>
<keyword id="KW-0949">S-adenosyl-L-methionine</keyword>
<keyword id="KW-0808">Transferase</keyword>
<proteinExistence type="inferred from homology"/>
<dbReference type="EC" id="2.1.1.-" evidence="1"/>
<dbReference type="EMBL" id="CP000139">
    <property type="protein sequence ID" value="ABR40659.1"/>
    <property type="molecule type" value="Genomic_DNA"/>
</dbReference>
<dbReference type="RefSeq" id="WP_005846883.1">
    <property type="nucleotide sequence ID" value="NZ_JANSWM010000059.1"/>
</dbReference>
<dbReference type="SMR" id="A6L4P5"/>
<dbReference type="STRING" id="435590.BVU_3021"/>
<dbReference type="PaxDb" id="435590-BVU_3021"/>
<dbReference type="GeneID" id="5303982"/>
<dbReference type="KEGG" id="bvu:BVU_3021"/>
<dbReference type="eggNOG" id="COG0357">
    <property type="taxonomic scope" value="Bacteria"/>
</dbReference>
<dbReference type="HOGENOM" id="CLU_065341_2_2_10"/>
<dbReference type="BioCyc" id="BVUL435590:G1G59-3144-MONOMER"/>
<dbReference type="Proteomes" id="UP000002861">
    <property type="component" value="Chromosome"/>
</dbReference>
<dbReference type="GO" id="GO:0005829">
    <property type="term" value="C:cytosol"/>
    <property type="evidence" value="ECO:0007669"/>
    <property type="project" value="TreeGrafter"/>
</dbReference>
<dbReference type="GO" id="GO:0070043">
    <property type="term" value="F:rRNA (guanine-N7-)-methyltransferase activity"/>
    <property type="evidence" value="ECO:0007669"/>
    <property type="project" value="UniProtKB-UniRule"/>
</dbReference>
<dbReference type="CDD" id="cd02440">
    <property type="entry name" value="AdoMet_MTases"/>
    <property type="match status" value="1"/>
</dbReference>
<dbReference type="FunFam" id="3.40.50.150:FF:000429">
    <property type="entry name" value="Ribosomal RNA small subunit methyltransferase G"/>
    <property type="match status" value="1"/>
</dbReference>
<dbReference type="Gene3D" id="3.40.50.150">
    <property type="entry name" value="Vaccinia Virus protein VP39"/>
    <property type="match status" value="1"/>
</dbReference>
<dbReference type="HAMAP" id="MF_00074">
    <property type="entry name" value="16SrRNA_methyltr_G"/>
    <property type="match status" value="1"/>
</dbReference>
<dbReference type="InterPro" id="IPR003682">
    <property type="entry name" value="rRNA_ssu_MeTfrase_G"/>
</dbReference>
<dbReference type="InterPro" id="IPR029063">
    <property type="entry name" value="SAM-dependent_MTases_sf"/>
</dbReference>
<dbReference type="NCBIfam" id="TIGR00138">
    <property type="entry name" value="rsmG_gidB"/>
    <property type="match status" value="1"/>
</dbReference>
<dbReference type="PANTHER" id="PTHR31760">
    <property type="entry name" value="S-ADENOSYL-L-METHIONINE-DEPENDENT METHYLTRANSFERASES SUPERFAMILY PROTEIN"/>
    <property type="match status" value="1"/>
</dbReference>
<dbReference type="PANTHER" id="PTHR31760:SF0">
    <property type="entry name" value="S-ADENOSYL-L-METHIONINE-DEPENDENT METHYLTRANSFERASES SUPERFAMILY PROTEIN"/>
    <property type="match status" value="1"/>
</dbReference>
<dbReference type="Pfam" id="PF02527">
    <property type="entry name" value="GidB"/>
    <property type="match status" value="1"/>
</dbReference>
<dbReference type="PIRSF" id="PIRSF003078">
    <property type="entry name" value="GidB"/>
    <property type="match status" value="1"/>
</dbReference>
<dbReference type="SUPFAM" id="SSF53335">
    <property type="entry name" value="S-adenosyl-L-methionine-dependent methyltransferases"/>
    <property type="match status" value="1"/>
</dbReference>
<name>RSMG_PHOV8</name>
<evidence type="ECO:0000255" key="1">
    <source>
        <dbReference type="HAMAP-Rule" id="MF_00074"/>
    </source>
</evidence>
<reference key="1">
    <citation type="journal article" date="2007" name="PLoS Biol.">
        <title>Evolution of symbiotic bacteria in the distal human intestine.</title>
        <authorList>
            <person name="Xu J."/>
            <person name="Mahowald M.A."/>
            <person name="Ley R.E."/>
            <person name="Lozupone C.A."/>
            <person name="Hamady M."/>
            <person name="Martens E.C."/>
            <person name="Henrissat B."/>
            <person name="Coutinho P.M."/>
            <person name="Minx P."/>
            <person name="Latreille P."/>
            <person name="Cordum H."/>
            <person name="Van Brunt A."/>
            <person name="Kim K."/>
            <person name="Fulton R.S."/>
            <person name="Fulton L.A."/>
            <person name="Clifton S.W."/>
            <person name="Wilson R.K."/>
            <person name="Knight R.D."/>
            <person name="Gordon J.I."/>
        </authorList>
    </citation>
    <scope>NUCLEOTIDE SEQUENCE [LARGE SCALE GENOMIC DNA]</scope>
    <source>
        <strain>ATCC 8482 / DSM 1447 / JCM 5826 / CCUG 4940 / NBRC 14291 / NCTC 11154</strain>
    </source>
</reference>
<organism>
    <name type="scientific">Phocaeicola vulgatus (strain ATCC 8482 / DSM 1447 / JCM 5826 / CCUG 4940 / NBRC 14291 / NCTC 11154)</name>
    <name type="common">Bacteroides vulgatus</name>
    <dbReference type="NCBI Taxonomy" id="435590"/>
    <lineage>
        <taxon>Bacteria</taxon>
        <taxon>Pseudomonadati</taxon>
        <taxon>Bacteroidota</taxon>
        <taxon>Bacteroidia</taxon>
        <taxon>Bacteroidales</taxon>
        <taxon>Bacteroidaceae</taxon>
        <taxon>Phocaeicola</taxon>
    </lineage>
</organism>
<accession>A6L4P5</accession>
<comment type="function">
    <text evidence="1">Specifically methylates the N7 position of a guanine in 16S rRNA.</text>
</comment>
<comment type="subcellular location">
    <subcellularLocation>
        <location evidence="1">Cytoplasm</location>
    </subcellularLocation>
</comment>
<comment type="similarity">
    <text evidence="1">Belongs to the methyltransferase superfamily. RNA methyltransferase RsmG family.</text>
</comment>
<protein>
    <recommendedName>
        <fullName evidence="1">Ribosomal RNA small subunit methyltransferase G</fullName>
        <ecNumber evidence="1">2.1.1.-</ecNumber>
    </recommendedName>
    <alternativeName>
        <fullName evidence="1">16S rRNA 7-methylguanosine methyltransferase</fullName>
        <shortName evidence="1">16S rRNA m7G methyltransferase</shortName>
    </alternativeName>
</protein>
<sequence>MELILKYFPNLSEQQKTQFAALYDLYTDWNSKINVISRKDITNLYEHHVLHSLGIAKVINFTPDTQIMDLGTGGGFPGIPLAILFPEVQFHLVDSIGKKVKVATEIANAIGLKNVTFRHCRAEEEKRKFDFVVSRAVMPLGDLIKIIRKNIRQEQHNALPNGLICLKGGELEQETMPVKHKTMLYDLKNEFTEDFFKTKKVVYVTISGL</sequence>
<gene>
    <name evidence="1" type="primary">rsmG</name>
    <name type="ordered locus">BVU_3021</name>
</gene>